<accession>Q43467</accession>
<name>EFTU1_SOYBN</name>
<proteinExistence type="inferred from homology"/>
<evidence type="ECO:0000250" key="1"/>
<evidence type="ECO:0000255" key="2"/>
<evidence type="ECO:0000256" key="3">
    <source>
        <dbReference type="SAM" id="MobiDB-lite"/>
    </source>
</evidence>
<evidence type="ECO:0000305" key="4"/>
<reference key="1">
    <citation type="journal article" date="1993" name="Chimia">
        <title>Soybean (Glycine max l.) nuclear DNA contains four tuf genes conding for the chloroplast specific translation elongation factor EF-Tu.</title>
        <authorList>
            <person name="Bonny C."/>
            <person name="Stutz E."/>
        </authorList>
    </citation>
    <scope>NUCLEOTIDE SEQUENCE [GENOMIC DNA]</scope>
    <source>
        <strain>cv. Maple Arrow</strain>
        <tissue>Leaf</tissue>
    </source>
</reference>
<organism>
    <name type="scientific">Glycine max</name>
    <name type="common">Soybean</name>
    <name type="synonym">Glycine hispida</name>
    <dbReference type="NCBI Taxonomy" id="3847"/>
    <lineage>
        <taxon>Eukaryota</taxon>
        <taxon>Viridiplantae</taxon>
        <taxon>Streptophyta</taxon>
        <taxon>Embryophyta</taxon>
        <taxon>Tracheophyta</taxon>
        <taxon>Spermatophyta</taxon>
        <taxon>Magnoliopsida</taxon>
        <taxon>eudicotyledons</taxon>
        <taxon>Gunneridae</taxon>
        <taxon>Pentapetalae</taxon>
        <taxon>rosids</taxon>
        <taxon>fabids</taxon>
        <taxon>Fabales</taxon>
        <taxon>Fabaceae</taxon>
        <taxon>Papilionoideae</taxon>
        <taxon>50 kb inversion clade</taxon>
        <taxon>NPAAA clade</taxon>
        <taxon>indigoferoid/millettioid clade</taxon>
        <taxon>Phaseoleae</taxon>
        <taxon>Glycine</taxon>
        <taxon>Glycine subgen. Soja</taxon>
    </lineage>
</organism>
<comment type="function">
    <text>This protein promotes the GTP-dependent binding of aminoacyl-tRNA to the A-site of ribosomes during protein biosynthesis.</text>
</comment>
<comment type="subcellular location">
    <subcellularLocation>
        <location>Plastid</location>
        <location>Chloroplast</location>
    </subcellularLocation>
</comment>
<comment type="similarity">
    <text evidence="4">Belongs to the TRAFAC class translation factor GTPase superfamily. Classic translation factor GTPase family. EF-Tu/EF-1A subfamily.</text>
</comment>
<gene>
    <name type="primary">TUFA</name>
</gene>
<dbReference type="EMBL" id="X66062">
    <property type="protein sequence ID" value="CAA46864.1"/>
    <property type="molecule type" value="Genomic_DNA"/>
</dbReference>
<dbReference type="PIR" id="S21567">
    <property type="entry name" value="S21567"/>
</dbReference>
<dbReference type="SMR" id="Q43467"/>
<dbReference type="FunCoup" id="Q43467">
    <property type="interactions" value="4115"/>
</dbReference>
<dbReference type="STRING" id="3847.Q43467"/>
<dbReference type="GlyCosmos" id="Q43467">
    <property type="glycosylation" value="1 site, No reported glycans"/>
</dbReference>
<dbReference type="PaxDb" id="3847-GLYMA06G18640.1"/>
<dbReference type="ProMEX" id="Q43467"/>
<dbReference type="eggNOG" id="KOG0460">
    <property type="taxonomic scope" value="Eukaryota"/>
</dbReference>
<dbReference type="InParanoid" id="Q43467"/>
<dbReference type="Proteomes" id="UP000008827">
    <property type="component" value="Unplaced"/>
</dbReference>
<dbReference type="GO" id="GO:0009507">
    <property type="term" value="C:chloroplast"/>
    <property type="evidence" value="ECO:0007669"/>
    <property type="project" value="UniProtKB-SubCell"/>
</dbReference>
<dbReference type="GO" id="GO:0005739">
    <property type="term" value="C:mitochondrion"/>
    <property type="evidence" value="ECO:0000318"/>
    <property type="project" value="GO_Central"/>
</dbReference>
<dbReference type="GO" id="GO:0005525">
    <property type="term" value="F:GTP binding"/>
    <property type="evidence" value="ECO:0007669"/>
    <property type="project" value="UniProtKB-KW"/>
</dbReference>
<dbReference type="GO" id="GO:0003924">
    <property type="term" value="F:GTPase activity"/>
    <property type="evidence" value="ECO:0007669"/>
    <property type="project" value="InterPro"/>
</dbReference>
<dbReference type="GO" id="GO:0003746">
    <property type="term" value="F:translation elongation factor activity"/>
    <property type="evidence" value="ECO:0000318"/>
    <property type="project" value="GO_Central"/>
</dbReference>
<dbReference type="GO" id="GO:0070125">
    <property type="term" value="P:mitochondrial translational elongation"/>
    <property type="evidence" value="ECO:0000318"/>
    <property type="project" value="GO_Central"/>
</dbReference>
<dbReference type="CDD" id="cd01884">
    <property type="entry name" value="EF_Tu"/>
    <property type="match status" value="1"/>
</dbReference>
<dbReference type="CDD" id="cd03697">
    <property type="entry name" value="EFTU_II"/>
    <property type="match status" value="1"/>
</dbReference>
<dbReference type="CDD" id="cd03707">
    <property type="entry name" value="EFTU_III"/>
    <property type="match status" value="1"/>
</dbReference>
<dbReference type="FunFam" id="2.40.30.10:FF:000001">
    <property type="entry name" value="Elongation factor Tu"/>
    <property type="match status" value="1"/>
</dbReference>
<dbReference type="FunFam" id="2.40.30.10:FF:000046">
    <property type="entry name" value="Elongation factor Tu"/>
    <property type="match status" value="1"/>
</dbReference>
<dbReference type="FunFam" id="3.40.50.300:FF:000003">
    <property type="entry name" value="Elongation factor Tu"/>
    <property type="match status" value="1"/>
</dbReference>
<dbReference type="Gene3D" id="3.40.50.300">
    <property type="entry name" value="P-loop containing nucleotide triphosphate hydrolases"/>
    <property type="match status" value="1"/>
</dbReference>
<dbReference type="Gene3D" id="2.40.30.10">
    <property type="entry name" value="Translation factors"/>
    <property type="match status" value="2"/>
</dbReference>
<dbReference type="HAMAP" id="MF_00118_B">
    <property type="entry name" value="EF_Tu_B"/>
    <property type="match status" value="1"/>
</dbReference>
<dbReference type="InterPro" id="IPR041709">
    <property type="entry name" value="EF-Tu_GTP-bd"/>
</dbReference>
<dbReference type="InterPro" id="IPR050055">
    <property type="entry name" value="EF-Tu_GTPase"/>
</dbReference>
<dbReference type="InterPro" id="IPR004161">
    <property type="entry name" value="EFTu-like_2"/>
</dbReference>
<dbReference type="InterPro" id="IPR033720">
    <property type="entry name" value="EFTU_2"/>
</dbReference>
<dbReference type="InterPro" id="IPR031157">
    <property type="entry name" value="G_TR_CS"/>
</dbReference>
<dbReference type="InterPro" id="IPR027417">
    <property type="entry name" value="P-loop_NTPase"/>
</dbReference>
<dbReference type="InterPro" id="IPR005225">
    <property type="entry name" value="Small_GTP-bd"/>
</dbReference>
<dbReference type="InterPro" id="IPR000795">
    <property type="entry name" value="T_Tr_GTP-bd_dom"/>
</dbReference>
<dbReference type="InterPro" id="IPR009000">
    <property type="entry name" value="Transl_B-barrel_sf"/>
</dbReference>
<dbReference type="InterPro" id="IPR009001">
    <property type="entry name" value="Transl_elong_EF1A/Init_IF2_C"/>
</dbReference>
<dbReference type="InterPro" id="IPR004541">
    <property type="entry name" value="Transl_elong_EFTu/EF1A_bac/org"/>
</dbReference>
<dbReference type="InterPro" id="IPR004160">
    <property type="entry name" value="Transl_elong_EFTu/EF1A_C"/>
</dbReference>
<dbReference type="NCBIfam" id="TIGR00485">
    <property type="entry name" value="EF-Tu"/>
    <property type="match status" value="1"/>
</dbReference>
<dbReference type="NCBIfam" id="NF000766">
    <property type="entry name" value="PRK00049.1"/>
    <property type="match status" value="1"/>
</dbReference>
<dbReference type="NCBIfam" id="NF009372">
    <property type="entry name" value="PRK12735.1"/>
    <property type="match status" value="1"/>
</dbReference>
<dbReference type="NCBIfam" id="NF009373">
    <property type="entry name" value="PRK12736.1"/>
    <property type="match status" value="1"/>
</dbReference>
<dbReference type="NCBIfam" id="TIGR00231">
    <property type="entry name" value="small_GTP"/>
    <property type="match status" value="1"/>
</dbReference>
<dbReference type="PANTHER" id="PTHR43721:SF35">
    <property type="entry name" value="ELONGATION FACTOR TU, CHLOROPLASTIC"/>
    <property type="match status" value="1"/>
</dbReference>
<dbReference type="PANTHER" id="PTHR43721">
    <property type="entry name" value="ELONGATION FACTOR TU-RELATED"/>
    <property type="match status" value="1"/>
</dbReference>
<dbReference type="Pfam" id="PF00009">
    <property type="entry name" value="GTP_EFTU"/>
    <property type="match status" value="1"/>
</dbReference>
<dbReference type="Pfam" id="PF03144">
    <property type="entry name" value="GTP_EFTU_D2"/>
    <property type="match status" value="1"/>
</dbReference>
<dbReference type="Pfam" id="PF03143">
    <property type="entry name" value="GTP_EFTU_D3"/>
    <property type="match status" value="1"/>
</dbReference>
<dbReference type="PRINTS" id="PR00315">
    <property type="entry name" value="ELONGATNFCT"/>
</dbReference>
<dbReference type="SUPFAM" id="SSF50465">
    <property type="entry name" value="EF-Tu/eEF-1alpha/eIF2-gamma C-terminal domain"/>
    <property type="match status" value="1"/>
</dbReference>
<dbReference type="SUPFAM" id="SSF52540">
    <property type="entry name" value="P-loop containing nucleoside triphosphate hydrolases"/>
    <property type="match status" value="1"/>
</dbReference>
<dbReference type="SUPFAM" id="SSF50447">
    <property type="entry name" value="Translation proteins"/>
    <property type="match status" value="1"/>
</dbReference>
<dbReference type="PROSITE" id="PS00301">
    <property type="entry name" value="G_TR_1"/>
    <property type="match status" value="1"/>
</dbReference>
<dbReference type="PROSITE" id="PS51722">
    <property type="entry name" value="G_TR_2"/>
    <property type="match status" value="1"/>
</dbReference>
<keyword id="KW-0150">Chloroplast</keyword>
<keyword id="KW-0251">Elongation factor</keyword>
<keyword id="KW-0325">Glycoprotein</keyword>
<keyword id="KW-0342">GTP-binding</keyword>
<keyword id="KW-0547">Nucleotide-binding</keyword>
<keyword id="KW-0934">Plastid</keyword>
<keyword id="KW-0648">Protein biosynthesis</keyword>
<keyword id="KW-1185">Reference proteome</keyword>
<keyword id="KW-0809">Transit peptide</keyword>
<protein>
    <recommendedName>
        <fullName>Elongation factor Tu, chloroplastic</fullName>
        <shortName>EF-Tu</shortName>
    </recommendedName>
</protein>
<sequence>MAVSSATASSKLILLPHASSSSSLNSTPFRSSTTNTHKLTPLSSSFLHPTTVLRRTPSSTTTPRRTFTVRAARGKFERKKPHVNIGTIGHVDHGKTTLTAALTMALAALGNSAPKKYDEIDAAPEERARGITINTATVEYETENRHYAHVDCPGHADYVKNMITGAAQMDGAILVVSGADGPMPQTKEHIILAKQVGVPNMVVFLNKQDQVDDEELLQLVEIEVRDLLSSYEFPGDDTPIVSGSALLALEALMANPAIKRGDNEWVDKIFQLMDEVDNYIPIPQRQTDLPFLLAVEDVFSITGRGTVATGRVERGTIKVGETVDLVGLRETRNTTVTGVEMFQKILDEALAGDNVGLLLRGVQKTDIQRGMVLAKPGTITPHTKFSAIVYVLKKEEGGRHSPFFAGYRPQFYMRTTDVTGKVTSIMNDKDEESTMVLPGDRVKMVVELIVPVACEQGMRFAIREGGKTVGAGVIQSIIE</sequence>
<feature type="transit peptide" description="Chloroplast" evidence="2">
    <location>
        <begin position="1"/>
        <end position="71"/>
    </location>
</feature>
<feature type="chain" id="PRO_0000007458" description="Elongation factor Tu, chloroplastic">
    <location>
        <begin position="72"/>
        <end position="479"/>
    </location>
</feature>
<feature type="domain" description="tr-type G">
    <location>
        <begin position="80"/>
        <end position="284"/>
    </location>
</feature>
<feature type="region of interest" description="Disordered" evidence="3">
    <location>
        <begin position="19"/>
        <end position="43"/>
    </location>
</feature>
<feature type="region of interest" description="G1" evidence="1">
    <location>
        <begin position="89"/>
        <end position="96"/>
    </location>
</feature>
<feature type="region of interest" description="G2" evidence="1">
    <location>
        <begin position="130"/>
        <end position="134"/>
    </location>
</feature>
<feature type="region of interest" description="G3" evidence="1">
    <location>
        <begin position="151"/>
        <end position="154"/>
    </location>
</feature>
<feature type="region of interest" description="G4" evidence="1">
    <location>
        <begin position="206"/>
        <end position="209"/>
    </location>
</feature>
<feature type="region of interest" description="G5" evidence="1">
    <location>
        <begin position="244"/>
        <end position="246"/>
    </location>
</feature>
<feature type="compositionally biased region" description="Low complexity" evidence="3">
    <location>
        <begin position="19"/>
        <end position="32"/>
    </location>
</feature>
<feature type="compositionally biased region" description="Polar residues" evidence="3">
    <location>
        <begin position="33"/>
        <end position="43"/>
    </location>
</feature>
<feature type="binding site" evidence="1">
    <location>
        <begin position="89"/>
        <end position="96"/>
    </location>
    <ligand>
        <name>GTP</name>
        <dbReference type="ChEBI" id="CHEBI:37565"/>
    </ligand>
</feature>
<feature type="binding site" evidence="1">
    <location>
        <begin position="151"/>
        <end position="155"/>
    </location>
    <ligand>
        <name>GTP</name>
        <dbReference type="ChEBI" id="CHEBI:37565"/>
    </ligand>
</feature>
<feature type="binding site" evidence="1">
    <location>
        <begin position="206"/>
        <end position="209"/>
    </location>
    <ligand>
        <name>GTP</name>
        <dbReference type="ChEBI" id="CHEBI:37565"/>
    </ligand>
</feature>
<feature type="glycosylation site" description="N-linked (GlcNAc...) asparagine" evidence="2">
    <location>
        <position position="333"/>
    </location>
</feature>